<keyword id="KW-0169">Cobalamin biosynthesis</keyword>
<keyword id="KW-0489">Methyltransferase</keyword>
<keyword id="KW-0949">S-adenosyl-L-methionine</keyword>
<keyword id="KW-0808">Transferase</keyword>
<comment type="function">
    <text evidence="1">Catalyzes the methylation of C-1 in cobalt-precorrin-5B to form cobalt-precorrin-6A.</text>
</comment>
<comment type="catalytic activity">
    <reaction evidence="1">
        <text>Co-precorrin-5B + S-adenosyl-L-methionine = Co-precorrin-6A + S-adenosyl-L-homocysteine</text>
        <dbReference type="Rhea" id="RHEA:26285"/>
        <dbReference type="ChEBI" id="CHEBI:57856"/>
        <dbReference type="ChEBI" id="CHEBI:59789"/>
        <dbReference type="ChEBI" id="CHEBI:60063"/>
        <dbReference type="ChEBI" id="CHEBI:60064"/>
        <dbReference type="EC" id="2.1.1.195"/>
    </reaction>
</comment>
<comment type="pathway">
    <text evidence="1">Cofactor biosynthesis; adenosylcobalamin biosynthesis; cob(II)yrinate a,c-diamide from sirohydrochlorin (anaerobic route): step 6/10.</text>
</comment>
<comment type="similarity">
    <text evidence="1">Belongs to the CbiD family.</text>
</comment>
<protein>
    <recommendedName>
        <fullName evidence="1">Cobalt-precorrin-5B C(1)-methyltransferase</fullName>
        <ecNumber evidence="1">2.1.1.195</ecNumber>
    </recommendedName>
    <alternativeName>
        <fullName evidence="1">Cobalt-precorrin-6A synthase</fullName>
    </alternativeName>
</protein>
<proteinExistence type="inferred from homology"/>
<accession>A4JEB6</accession>
<sequence length="362" mass="37285">MRDETPEQPAPLRFGYTTGSCATATSLAAARLLLGGRADDAVEIVLPKGQRVMMRLEFCRTTAAGAEAGTIKDAGDDPDVTHGALVFARVALSAAPGVRFHAGPGVGTVTRAGLTLPIGEPAINPVPRQMMTTHLDALAAEHGYTGGFDVTIGVEGGEALALKTMNPRLGIVGGLSILGTTGIVRPFSCAAYIASIHQGIDVARANGIAHIAACTGNASEDAMRAHYGLPDIALIEMGDFAGAVLKHLRRAPLARVSMCGGFGKLSKLAAGHLDLHSRHSSIDLPLLAQWAADAGASDALQAAMRAANTSQEALKLALADGVPLGDIVCAHALRVARDIVPASVAVEMFAIDRQGRFVGSAR</sequence>
<dbReference type="EC" id="2.1.1.195" evidence="1"/>
<dbReference type="EMBL" id="CP000614">
    <property type="protein sequence ID" value="ABO54619.1"/>
    <property type="molecule type" value="Genomic_DNA"/>
</dbReference>
<dbReference type="SMR" id="A4JEB6"/>
<dbReference type="KEGG" id="bvi:Bcep1808_1612"/>
<dbReference type="eggNOG" id="COG1903">
    <property type="taxonomic scope" value="Bacteria"/>
</dbReference>
<dbReference type="HOGENOM" id="CLU_041273_0_0_4"/>
<dbReference type="UniPathway" id="UPA00148">
    <property type="reaction ID" value="UER00227"/>
</dbReference>
<dbReference type="Proteomes" id="UP000002287">
    <property type="component" value="Chromosome 1"/>
</dbReference>
<dbReference type="GO" id="GO:0043780">
    <property type="term" value="F:cobalt-precorrin-5B C1-methyltransferase activity"/>
    <property type="evidence" value="ECO:0007669"/>
    <property type="project" value="RHEA"/>
</dbReference>
<dbReference type="GO" id="GO:0019251">
    <property type="term" value="P:anaerobic cobalamin biosynthetic process"/>
    <property type="evidence" value="ECO:0007669"/>
    <property type="project" value="UniProtKB-UniRule"/>
</dbReference>
<dbReference type="GO" id="GO:0032259">
    <property type="term" value="P:methylation"/>
    <property type="evidence" value="ECO:0007669"/>
    <property type="project" value="UniProtKB-KW"/>
</dbReference>
<dbReference type="Gene3D" id="3.30.2110.10">
    <property type="entry name" value="CbiD-like"/>
    <property type="match status" value="1"/>
</dbReference>
<dbReference type="HAMAP" id="MF_00787">
    <property type="entry name" value="CbiD"/>
    <property type="match status" value="1"/>
</dbReference>
<dbReference type="InterPro" id="IPR002748">
    <property type="entry name" value="CbiD"/>
</dbReference>
<dbReference type="InterPro" id="IPR036074">
    <property type="entry name" value="CbiD_sf"/>
</dbReference>
<dbReference type="NCBIfam" id="TIGR00312">
    <property type="entry name" value="cbiD"/>
    <property type="match status" value="1"/>
</dbReference>
<dbReference type="NCBIfam" id="NF000849">
    <property type="entry name" value="PRK00075.1-1"/>
    <property type="match status" value="1"/>
</dbReference>
<dbReference type="PANTHER" id="PTHR35863">
    <property type="entry name" value="COBALT-PRECORRIN-5B C(1)-METHYLTRANSFERASE"/>
    <property type="match status" value="1"/>
</dbReference>
<dbReference type="PANTHER" id="PTHR35863:SF1">
    <property type="entry name" value="COBALT-PRECORRIN-5B C(1)-METHYLTRANSFERASE"/>
    <property type="match status" value="1"/>
</dbReference>
<dbReference type="Pfam" id="PF01888">
    <property type="entry name" value="CbiD"/>
    <property type="match status" value="1"/>
</dbReference>
<dbReference type="PIRSF" id="PIRSF026782">
    <property type="entry name" value="CbiD"/>
    <property type="match status" value="1"/>
</dbReference>
<dbReference type="SUPFAM" id="SSF111342">
    <property type="entry name" value="CbiD-like"/>
    <property type="match status" value="1"/>
</dbReference>
<organism>
    <name type="scientific">Burkholderia vietnamiensis (strain G4 / LMG 22486)</name>
    <name type="common">Burkholderia cepacia (strain R1808)</name>
    <dbReference type="NCBI Taxonomy" id="269482"/>
    <lineage>
        <taxon>Bacteria</taxon>
        <taxon>Pseudomonadati</taxon>
        <taxon>Pseudomonadota</taxon>
        <taxon>Betaproteobacteria</taxon>
        <taxon>Burkholderiales</taxon>
        <taxon>Burkholderiaceae</taxon>
        <taxon>Burkholderia</taxon>
        <taxon>Burkholderia cepacia complex</taxon>
    </lineage>
</organism>
<evidence type="ECO:0000255" key="1">
    <source>
        <dbReference type="HAMAP-Rule" id="MF_00787"/>
    </source>
</evidence>
<feature type="chain" id="PRO_1000046851" description="Cobalt-precorrin-5B C(1)-methyltransferase">
    <location>
        <begin position="1"/>
        <end position="362"/>
    </location>
</feature>
<name>CBID_BURVG</name>
<reference key="1">
    <citation type="submission" date="2007-03" db="EMBL/GenBank/DDBJ databases">
        <title>Complete sequence of chromosome 1 of Burkholderia vietnamiensis G4.</title>
        <authorList>
            <consortium name="US DOE Joint Genome Institute"/>
            <person name="Copeland A."/>
            <person name="Lucas S."/>
            <person name="Lapidus A."/>
            <person name="Barry K."/>
            <person name="Detter J.C."/>
            <person name="Glavina del Rio T."/>
            <person name="Hammon N."/>
            <person name="Israni S."/>
            <person name="Dalin E."/>
            <person name="Tice H."/>
            <person name="Pitluck S."/>
            <person name="Chain P."/>
            <person name="Malfatti S."/>
            <person name="Shin M."/>
            <person name="Vergez L."/>
            <person name="Schmutz J."/>
            <person name="Larimer F."/>
            <person name="Land M."/>
            <person name="Hauser L."/>
            <person name="Kyrpides N."/>
            <person name="Tiedje J."/>
            <person name="Richardson P."/>
        </authorList>
    </citation>
    <scope>NUCLEOTIDE SEQUENCE [LARGE SCALE GENOMIC DNA]</scope>
    <source>
        <strain>G4 / LMG 22486</strain>
    </source>
</reference>
<gene>
    <name evidence="1" type="primary">cbiD</name>
    <name type="ordered locus">Bcep1808_1612</name>
</gene>